<dbReference type="EMBL" id="AM167904">
    <property type="protein sequence ID" value="CAJ47596.1"/>
    <property type="molecule type" value="Genomic_DNA"/>
</dbReference>
<dbReference type="RefSeq" id="WP_012415723.1">
    <property type="nucleotide sequence ID" value="NC_010645.1"/>
</dbReference>
<dbReference type="SMR" id="Q2L2M6"/>
<dbReference type="STRING" id="360910.BAV0012"/>
<dbReference type="GeneID" id="92936743"/>
<dbReference type="KEGG" id="bav:BAV0012"/>
<dbReference type="eggNOG" id="COG0222">
    <property type="taxonomic scope" value="Bacteria"/>
</dbReference>
<dbReference type="HOGENOM" id="CLU_086499_3_2_4"/>
<dbReference type="OrthoDB" id="9811748at2"/>
<dbReference type="Proteomes" id="UP000001977">
    <property type="component" value="Chromosome"/>
</dbReference>
<dbReference type="GO" id="GO:0022625">
    <property type="term" value="C:cytosolic large ribosomal subunit"/>
    <property type="evidence" value="ECO:0007669"/>
    <property type="project" value="TreeGrafter"/>
</dbReference>
<dbReference type="GO" id="GO:0003729">
    <property type="term" value="F:mRNA binding"/>
    <property type="evidence" value="ECO:0007669"/>
    <property type="project" value="TreeGrafter"/>
</dbReference>
<dbReference type="GO" id="GO:0003735">
    <property type="term" value="F:structural constituent of ribosome"/>
    <property type="evidence" value="ECO:0007669"/>
    <property type="project" value="InterPro"/>
</dbReference>
<dbReference type="GO" id="GO:0006412">
    <property type="term" value="P:translation"/>
    <property type="evidence" value="ECO:0007669"/>
    <property type="project" value="UniProtKB-UniRule"/>
</dbReference>
<dbReference type="CDD" id="cd00387">
    <property type="entry name" value="Ribosomal_L7_L12"/>
    <property type="match status" value="1"/>
</dbReference>
<dbReference type="FunFam" id="3.30.1390.10:FF:000001">
    <property type="entry name" value="50S ribosomal protein L7/L12"/>
    <property type="match status" value="1"/>
</dbReference>
<dbReference type="Gene3D" id="3.30.1390.10">
    <property type="match status" value="1"/>
</dbReference>
<dbReference type="Gene3D" id="1.20.5.710">
    <property type="entry name" value="Single helix bin"/>
    <property type="match status" value="1"/>
</dbReference>
<dbReference type="HAMAP" id="MF_00368">
    <property type="entry name" value="Ribosomal_bL12"/>
    <property type="match status" value="1"/>
</dbReference>
<dbReference type="InterPro" id="IPR000206">
    <property type="entry name" value="Ribosomal_bL12"/>
</dbReference>
<dbReference type="InterPro" id="IPR013823">
    <property type="entry name" value="Ribosomal_bL12_C"/>
</dbReference>
<dbReference type="InterPro" id="IPR014719">
    <property type="entry name" value="Ribosomal_bL12_C/ClpS-like"/>
</dbReference>
<dbReference type="InterPro" id="IPR008932">
    <property type="entry name" value="Ribosomal_bL12_oligo"/>
</dbReference>
<dbReference type="InterPro" id="IPR036235">
    <property type="entry name" value="Ribosomal_bL12_oligo_N_sf"/>
</dbReference>
<dbReference type="NCBIfam" id="TIGR00855">
    <property type="entry name" value="L12"/>
    <property type="match status" value="1"/>
</dbReference>
<dbReference type="PANTHER" id="PTHR45987">
    <property type="entry name" value="39S RIBOSOMAL PROTEIN L12"/>
    <property type="match status" value="1"/>
</dbReference>
<dbReference type="PANTHER" id="PTHR45987:SF4">
    <property type="entry name" value="LARGE RIBOSOMAL SUBUNIT PROTEIN BL12M"/>
    <property type="match status" value="1"/>
</dbReference>
<dbReference type="Pfam" id="PF00542">
    <property type="entry name" value="Ribosomal_L12"/>
    <property type="match status" value="1"/>
</dbReference>
<dbReference type="Pfam" id="PF16320">
    <property type="entry name" value="Ribosomal_L12_N"/>
    <property type="match status" value="1"/>
</dbReference>
<dbReference type="SUPFAM" id="SSF54736">
    <property type="entry name" value="ClpS-like"/>
    <property type="match status" value="1"/>
</dbReference>
<dbReference type="SUPFAM" id="SSF48300">
    <property type="entry name" value="Ribosomal protein L7/12, oligomerisation (N-terminal) domain"/>
    <property type="match status" value="1"/>
</dbReference>
<comment type="function">
    <text evidence="1">Forms part of the ribosomal stalk which helps the ribosome interact with GTP-bound translation factors. Is thus essential for accurate translation.</text>
</comment>
<comment type="subunit">
    <text evidence="1">Homodimer. Part of the ribosomal stalk of the 50S ribosomal subunit. Forms a multimeric L10(L12)X complex, where L10 forms an elongated spine to which 2 to 4 L12 dimers bind in a sequential fashion. Binds GTP-bound translation factors.</text>
</comment>
<comment type="similarity">
    <text evidence="1">Belongs to the bacterial ribosomal protein bL12 family.</text>
</comment>
<organism>
    <name type="scientific">Bordetella avium (strain 197N)</name>
    <dbReference type="NCBI Taxonomy" id="360910"/>
    <lineage>
        <taxon>Bacteria</taxon>
        <taxon>Pseudomonadati</taxon>
        <taxon>Pseudomonadota</taxon>
        <taxon>Betaproteobacteria</taxon>
        <taxon>Burkholderiales</taxon>
        <taxon>Alcaligenaceae</taxon>
        <taxon>Bordetella</taxon>
    </lineage>
</organism>
<sequence>MALNKAEILDAIAGMTVLELSELIKEMEEKFGVSAAAAAVAVAAPAAGGAAAAAEEQTEFTVVLVEAGANKVSVIKAVRELTGLGLKEAKDLVDGAPKPVKEALPKADAEAAKKKLEEAGAKVEVK</sequence>
<reference key="1">
    <citation type="journal article" date="2006" name="J. Bacteriol.">
        <title>Comparison of the genome sequence of the poultry pathogen Bordetella avium with those of B. bronchiseptica, B. pertussis, and B. parapertussis reveals extensive diversity in surface structures associated with host interaction.</title>
        <authorList>
            <person name="Sebaihia M."/>
            <person name="Preston A."/>
            <person name="Maskell D.J."/>
            <person name="Kuzmiak H."/>
            <person name="Connell T.D."/>
            <person name="King N.D."/>
            <person name="Orndorff P.E."/>
            <person name="Miyamoto D.M."/>
            <person name="Thomson N.R."/>
            <person name="Harris D."/>
            <person name="Goble A."/>
            <person name="Lord A."/>
            <person name="Murphy L."/>
            <person name="Quail M.A."/>
            <person name="Rutter S."/>
            <person name="Squares R."/>
            <person name="Squares S."/>
            <person name="Woodward J."/>
            <person name="Parkhill J."/>
            <person name="Temple L.M."/>
        </authorList>
    </citation>
    <scope>NUCLEOTIDE SEQUENCE [LARGE SCALE GENOMIC DNA]</scope>
    <source>
        <strain>197N</strain>
    </source>
</reference>
<gene>
    <name evidence="1" type="primary">rplL</name>
    <name type="ordered locus">BAV0012</name>
</gene>
<evidence type="ECO:0000255" key="1">
    <source>
        <dbReference type="HAMAP-Rule" id="MF_00368"/>
    </source>
</evidence>
<evidence type="ECO:0000305" key="2"/>
<protein>
    <recommendedName>
        <fullName evidence="1">Large ribosomal subunit protein bL12</fullName>
    </recommendedName>
    <alternativeName>
        <fullName evidence="2">50S ribosomal protein L7/L12</fullName>
    </alternativeName>
</protein>
<keyword id="KW-1185">Reference proteome</keyword>
<keyword id="KW-0687">Ribonucleoprotein</keyword>
<keyword id="KW-0689">Ribosomal protein</keyword>
<name>RL7_BORA1</name>
<feature type="chain" id="PRO_0000243394" description="Large ribosomal subunit protein bL12">
    <location>
        <begin position="1"/>
        <end position="126"/>
    </location>
</feature>
<accession>Q2L2M6</accession>
<proteinExistence type="inferred from homology"/>